<gene>
    <name evidence="1" type="primary">mnmA</name>
    <name type="ordered locus">PMN2A_0858</name>
</gene>
<keyword id="KW-0067">ATP-binding</keyword>
<keyword id="KW-0963">Cytoplasm</keyword>
<keyword id="KW-1015">Disulfide bond</keyword>
<keyword id="KW-0547">Nucleotide-binding</keyword>
<keyword id="KW-1185">Reference proteome</keyword>
<keyword id="KW-0694">RNA-binding</keyword>
<keyword id="KW-0808">Transferase</keyword>
<keyword id="KW-0819">tRNA processing</keyword>
<keyword id="KW-0820">tRNA-binding</keyword>
<sequence length="388" mass="43406">MPSEETVEKTLKRLQTFSGSHSVVVGLSGGVDSSLTAALLCKAGWDVEGLTLWLMKGKGSCCSDGLVDAAGICDQLGIKHHIVDSKEIFQKEIINNVLKGYEEGITPLPCSRCNKSVKFSEMLKWVKENKNIEKIATGHYARIRYSNESFNENDLPSDGIKRHKLLRGKDLNKDQSYFLYDLPQEILGKTIFPLGELTKEITRIEALKHSLKTAKKPESQDLCLAEHYGSMNAFIDKYLPQKKGEVVLKNGQIIGSHNGIQHFTIGQRKGLGIAWEVPLHVVEIDASLNRVIVAPREDSGKSECIVKDINWVSIEAPQEPIEVEVQIRYRSKAMKAKLIPIFDSNKENYCYKCNIHFEKDQFSITPGQAAVFYKGDYVLGGGLISKEY</sequence>
<reference key="1">
    <citation type="journal article" date="2007" name="PLoS Genet.">
        <title>Patterns and implications of gene gain and loss in the evolution of Prochlorococcus.</title>
        <authorList>
            <person name="Kettler G.C."/>
            <person name="Martiny A.C."/>
            <person name="Huang K."/>
            <person name="Zucker J."/>
            <person name="Coleman M.L."/>
            <person name="Rodrigue S."/>
            <person name="Chen F."/>
            <person name="Lapidus A."/>
            <person name="Ferriera S."/>
            <person name="Johnson J."/>
            <person name="Steglich C."/>
            <person name="Church G.M."/>
            <person name="Richardson P."/>
            <person name="Chisholm S.W."/>
        </authorList>
    </citation>
    <scope>NUCLEOTIDE SEQUENCE [LARGE SCALE GENOMIC DNA]</scope>
    <source>
        <strain>NATL2A</strain>
    </source>
</reference>
<protein>
    <recommendedName>
        <fullName evidence="1">tRNA-specific 2-thiouridylase MnmA</fullName>
        <ecNumber evidence="1">2.8.1.13</ecNumber>
    </recommendedName>
</protein>
<accession>Q46JH9</accession>
<organism>
    <name type="scientific">Prochlorococcus marinus (strain NATL2A)</name>
    <dbReference type="NCBI Taxonomy" id="59920"/>
    <lineage>
        <taxon>Bacteria</taxon>
        <taxon>Bacillati</taxon>
        <taxon>Cyanobacteriota</taxon>
        <taxon>Cyanophyceae</taxon>
        <taxon>Synechococcales</taxon>
        <taxon>Prochlorococcaceae</taxon>
        <taxon>Prochlorococcus</taxon>
    </lineage>
</organism>
<feature type="chain" id="PRO_0000349752" description="tRNA-specific 2-thiouridylase MnmA">
    <location>
        <begin position="1"/>
        <end position="388"/>
    </location>
</feature>
<feature type="region of interest" description="Interaction with tRNA" evidence="1">
    <location>
        <begin position="173"/>
        <end position="175"/>
    </location>
</feature>
<feature type="region of interest" description="Interaction with tRNA" evidence="1">
    <location>
        <begin position="328"/>
        <end position="329"/>
    </location>
</feature>
<feature type="active site" description="Nucleophile" evidence="1">
    <location>
        <position position="113"/>
    </location>
</feature>
<feature type="active site" description="Cysteine persulfide intermediate" evidence="1">
    <location>
        <position position="223"/>
    </location>
</feature>
<feature type="binding site" evidence="1">
    <location>
        <begin position="26"/>
        <end position="33"/>
    </location>
    <ligand>
        <name>ATP</name>
        <dbReference type="ChEBI" id="CHEBI:30616"/>
    </ligand>
</feature>
<feature type="binding site" evidence="1">
    <location>
        <position position="52"/>
    </location>
    <ligand>
        <name>ATP</name>
        <dbReference type="ChEBI" id="CHEBI:30616"/>
    </ligand>
</feature>
<feature type="binding site" evidence="1">
    <location>
        <position position="138"/>
    </location>
    <ligand>
        <name>ATP</name>
        <dbReference type="ChEBI" id="CHEBI:30616"/>
    </ligand>
</feature>
<feature type="site" description="Interaction with tRNA" evidence="1">
    <location>
        <position position="139"/>
    </location>
</feature>
<feature type="site" description="Interaction with tRNA" evidence="1">
    <location>
        <position position="368"/>
    </location>
</feature>
<feature type="disulfide bond" description="Alternate" evidence="1">
    <location>
        <begin position="113"/>
        <end position="223"/>
    </location>
</feature>
<comment type="function">
    <text evidence="1">Catalyzes the 2-thiolation of uridine at the wobble position (U34) of tRNA, leading to the formation of s(2)U34.</text>
</comment>
<comment type="catalytic activity">
    <reaction evidence="1">
        <text>S-sulfanyl-L-cysteinyl-[protein] + uridine(34) in tRNA + AH2 + ATP = 2-thiouridine(34) in tRNA + L-cysteinyl-[protein] + A + AMP + diphosphate + H(+)</text>
        <dbReference type="Rhea" id="RHEA:47032"/>
        <dbReference type="Rhea" id="RHEA-COMP:10131"/>
        <dbReference type="Rhea" id="RHEA-COMP:11726"/>
        <dbReference type="Rhea" id="RHEA-COMP:11727"/>
        <dbReference type="Rhea" id="RHEA-COMP:11728"/>
        <dbReference type="ChEBI" id="CHEBI:13193"/>
        <dbReference type="ChEBI" id="CHEBI:15378"/>
        <dbReference type="ChEBI" id="CHEBI:17499"/>
        <dbReference type="ChEBI" id="CHEBI:29950"/>
        <dbReference type="ChEBI" id="CHEBI:30616"/>
        <dbReference type="ChEBI" id="CHEBI:33019"/>
        <dbReference type="ChEBI" id="CHEBI:61963"/>
        <dbReference type="ChEBI" id="CHEBI:65315"/>
        <dbReference type="ChEBI" id="CHEBI:87170"/>
        <dbReference type="ChEBI" id="CHEBI:456215"/>
        <dbReference type="EC" id="2.8.1.13"/>
    </reaction>
</comment>
<comment type="subcellular location">
    <subcellularLocation>
        <location evidence="1">Cytoplasm</location>
    </subcellularLocation>
</comment>
<comment type="similarity">
    <text evidence="1">Belongs to the MnmA/TRMU family.</text>
</comment>
<proteinExistence type="inferred from homology"/>
<evidence type="ECO:0000255" key="1">
    <source>
        <dbReference type="HAMAP-Rule" id="MF_00144"/>
    </source>
</evidence>
<name>MNMA_PROMT</name>
<dbReference type="EC" id="2.8.1.13" evidence="1"/>
<dbReference type="EMBL" id="CP000095">
    <property type="protein sequence ID" value="AAZ58349.1"/>
    <property type="molecule type" value="Genomic_DNA"/>
</dbReference>
<dbReference type="SMR" id="Q46JH9"/>
<dbReference type="STRING" id="59920.PMN2A_0858"/>
<dbReference type="KEGG" id="pmn:PMN2A_0858"/>
<dbReference type="HOGENOM" id="CLU_035188_0_0_3"/>
<dbReference type="PhylomeDB" id="Q46JH9"/>
<dbReference type="Proteomes" id="UP000002535">
    <property type="component" value="Chromosome"/>
</dbReference>
<dbReference type="GO" id="GO:0005737">
    <property type="term" value="C:cytoplasm"/>
    <property type="evidence" value="ECO:0007669"/>
    <property type="project" value="UniProtKB-SubCell"/>
</dbReference>
<dbReference type="GO" id="GO:0005524">
    <property type="term" value="F:ATP binding"/>
    <property type="evidence" value="ECO:0007669"/>
    <property type="project" value="UniProtKB-KW"/>
</dbReference>
<dbReference type="GO" id="GO:0000049">
    <property type="term" value="F:tRNA binding"/>
    <property type="evidence" value="ECO:0007669"/>
    <property type="project" value="UniProtKB-KW"/>
</dbReference>
<dbReference type="GO" id="GO:0103016">
    <property type="term" value="F:tRNA-uridine 2-sulfurtransferase activity"/>
    <property type="evidence" value="ECO:0007669"/>
    <property type="project" value="UniProtKB-EC"/>
</dbReference>
<dbReference type="GO" id="GO:0002143">
    <property type="term" value="P:tRNA wobble position uridine thiolation"/>
    <property type="evidence" value="ECO:0007669"/>
    <property type="project" value="TreeGrafter"/>
</dbReference>
<dbReference type="CDD" id="cd01998">
    <property type="entry name" value="MnmA_TRMU-like"/>
    <property type="match status" value="1"/>
</dbReference>
<dbReference type="FunFam" id="2.30.30.280:FF:000001">
    <property type="entry name" value="tRNA-specific 2-thiouridylase MnmA"/>
    <property type="match status" value="1"/>
</dbReference>
<dbReference type="Gene3D" id="2.30.30.280">
    <property type="entry name" value="Adenine nucleotide alpha hydrolases-like domains"/>
    <property type="match status" value="1"/>
</dbReference>
<dbReference type="Gene3D" id="3.40.50.620">
    <property type="entry name" value="HUPs"/>
    <property type="match status" value="1"/>
</dbReference>
<dbReference type="Gene3D" id="2.40.30.10">
    <property type="entry name" value="Translation factors"/>
    <property type="match status" value="1"/>
</dbReference>
<dbReference type="HAMAP" id="MF_00144">
    <property type="entry name" value="tRNA_thiouridyl_MnmA"/>
    <property type="match status" value="1"/>
</dbReference>
<dbReference type="InterPro" id="IPR004506">
    <property type="entry name" value="MnmA-like"/>
</dbReference>
<dbReference type="InterPro" id="IPR046885">
    <property type="entry name" value="MnmA-like_C"/>
</dbReference>
<dbReference type="InterPro" id="IPR046884">
    <property type="entry name" value="MnmA-like_central"/>
</dbReference>
<dbReference type="InterPro" id="IPR023382">
    <property type="entry name" value="MnmA-like_central_sf"/>
</dbReference>
<dbReference type="InterPro" id="IPR014729">
    <property type="entry name" value="Rossmann-like_a/b/a_fold"/>
</dbReference>
<dbReference type="NCBIfam" id="NF001138">
    <property type="entry name" value="PRK00143.1"/>
    <property type="match status" value="1"/>
</dbReference>
<dbReference type="NCBIfam" id="TIGR00420">
    <property type="entry name" value="trmU"/>
    <property type="match status" value="1"/>
</dbReference>
<dbReference type="PANTHER" id="PTHR11933:SF5">
    <property type="entry name" value="MITOCHONDRIAL TRNA-SPECIFIC 2-THIOURIDYLASE 1"/>
    <property type="match status" value="1"/>
</dbReference>
<dbReference type="PANTHER" id="PTHR11933">
    <property type="entry name" value="TRNA 5-METHYLAMINOMETHYL-2-THIOURIDYLATE -METHYLTRANSFERASE"/>
    <property type="match status" value="1"/>
</dbReference>
<dbReference type="Pfam" id="PF03054">
    <property type="entry name" value="tRNA_Me_trans"/>
    <property type="match status" value="1"/>
</dbReference>
<dbReference type="Pfam" id="PF20258">
    <property type="entry name" value="tRNA_Me_trans_C"/>
    <property type="match status" value="1"/>
</dbReference>
<dbReference type="Pfam" id="PF20259">
    <property type="entry name" value="tRNA_Me_trans_M"/>
    <property type="match status" value="1"/>
</dbReference>
<dbReference type="SUPFAM" id="SSF52402">
    <property type="entry name" value="Adenine nucleotide alpha hydrolases-like"/>
    <property type="match status" value="1"/>
</dbReference>